<sequence length="438" mass="47492">MPISKIHARSVYDSRGNPTVEVDVVTETGLHRAIVPSGASTGQHEAHELRDGDKSKWLGKGVLTAVKNVNETIGPAVIKENLDVKEQSKIDEFLNKLDGTPNKSNLGANAILGVSLAIAKAGAAEKGVPLYAHISDLAGTKKPYVLPVPFQNVLNGGSHAGGRLAFQEFMIVPDTASSFSEGLRQGAEVYHKLKALAKKKYGQSAGNVGDEGGVAPDIQTAEEALDLITEAIEQAGYTGKIHIAMDVASSEFYKPEEKKYDLDFKNPDSDPSKWLTYEQLADLYKSLAAKYPIVSIEDPFAEDDWEAWSYFYKTSDFQIVGDDLTVTNPLRIKKAIELKSCNALLLKVNQIGTLTESIQAAKDSYADGWGVMVSHRSGETEDVTIADISVGLRSGQIKTGAPARSERLAKLNQILRIEEELGENAVYAGQNFRKSVNL</sequence>
<comment type="function">
    <text>Involved in osmoadaptation.</text>
</comment>
<comment type="catalytic activity">
    <reaction>
        <text>(2R)-2-phosphoglycerate = phosphoenolpyruvate + H2O</text>
        <dbReference type="Rhea" id="RHEA:10164"/>
        <dbReference type="ChEBI" id="CHEBI:15377"/>
        <dbReference type="ChEBI" id="CHEBI:58289"/>
        <dbReference type="ChEBI" id="CHEBI:58702"/>
        <dbReference type="EC" id="4.2.1.11"/>
    </reaction>
</comment>
<comment type="cofactor">
    <cofactor evidence="1">
        <name>Mg(2+)</name>
        <dbReference type="ChEBI" id="CHEBI:18420"/>
    </cofactor>
    <text evidence="1">Mg(2+) is required for catalysis and for stabilizing the dimer.</text>
</comment>
<comment type="pathway">
    <text>Carbohydrate degradation; glycolysis; pyruvate from D-glyceraldehyde 3-phosphate: step 4/5.</text>
</comment>
<comment type="subunit">
    <text evidence="1">Homodimer.</text>
</comment>
<comment type="subcellular location">
    <subcellularLocation>
        <location evidence="1">Cytoplasm</location>
    </subcellularLocation>
</comment>
<comment type="induction">
    <text evidence="2">Down-regulated when grown with elevated levels of potassium chloride.</text>
</comment>
<comment type="similarity">
    <text evidence="3">Belongs to the enolase family.</text>
</comment>
<feature type="initiator methionine" description="Removed" evidence="1">
    <location>
        <position position="1"/>
    </location>
</feature>
<feature type="chain" id="PRO_0000348281" description="Enolase">
    <location>
        <begin position="2"/>
        <end position="438"/>
    </location>
</feature>
<feature type="active site" description="Proton donor" evidence="1">
    <location>
        <position position="211"/>
    </location>
</feature>
<feature type="active site" description="Proton acceptor" evidence="1">
    <location>
        <position position="347"/>
    </location>
</feature>
<feature type="binding site" evidence="1">
    <location>
        <position position="159"/>
    </location>
    <ligand>
        <name>substrate</name>
    </ligand>
</feature>
<feature type="binding site" evidence="1">
    <location>
        <position position="168"/>
    </location>
    <ligand>
        <name>substrate</name>
    </ligand>
</feature>
<feature type="binding site" evidence="1">
    <location>
        <position position="246"/>
    </location>
    <ligand>
        <name>Mg(2+)</name>
        <dbReference type="ChEBI" id="CHEBI:18420"/>
    </ligand>
</feature>
<feature type="binding site" evidence="1">
    <location>
        <position position="297"/>
    </location>
    <ligand>
        <name>Mg(2+)</name>
        <dbReference type="ChEBI" id="CHEBI:18420"/>
    </ligand>
</feature>
<feature type="binding site" evidence="1">
    <location>
        <position position="297"/>
    </location>
    <ligand>
        <name>substrate</name>
    </ligand>
</feature>
<feature type="binding site" evidence="1">
    <location>
        <position position="322"/>
    </location>
    <ligand>
        <name>Mg(2+)</name>
        <dbReference type="ChEBI" id="CHEBI:18420"/>
    </ligand>
</feature>
<feature type="binding site" evidence="1">
    <location>
        <position position="322"/>
    </location>
    <ligand>
        <name>substrate</name>
    </ligand>
</feature>
<feature type="binding site" evidence="1">
    <location>
        <begin position="374"/>
        <end position="377"/>
    </location>
    <ligand>
        <name>substrate</name>
    </ligand>
</feature>
<feature type="binding site" evidence="1">
    <location>
        <position position="398"/>
    </location>
    <ligand>
        <name>substrate</name>
    </ligand>
</feature>
<name>ENO_EMENI</name>
<proteinExistence type="evidence at protein level"/>
<gene>
    <name type="primary">enoA</name>
    <name type="ORF">AN5746</name>
</gene>
<evidence type="ECO:0000250" key="1"/>
<evidence type="ECO:0000269" key="2">
    <source>
    </source>
</evidence>
<evidence type="ECO:0000305" key="3"/>
<dbReference type="EC" id="4.2.1.11"/>
<dbReference type="EMBL" id="AACD01000098">
    <property type="protein sequence ID" value="EAA62839.1"/>
    <property type="molecule type" value="Genomic_DNA"/>
</dbReference>
<dbReference type="EMBL" id="BN001305">
    <property type="protein sequence ID" value="CBF81288.1"/>
    <property type="molecule type" value="Genomic_DNA"/>
</dbReference>
<dbReference type="RefSeq" id="XP_663350.1">
    <property type="nucleotide sequence ID" value="XM_658258.1"/>
</dbReference>
<dbReference type="SMR" id="Q5B135"/>
<dbReference type="FunCoup" id="Q5B135">
    <property type="interactions" value="1104"/>
</dbReference>
<dbReference type="STRING" id="227321.Q5B135"/>
<dbReference type="EnsemblFungi" id="CBF81288">
    <property type="protein sequence ID" value="CBF81288"/>
    <property type="gene ID" value="ANIA_05746"/>
</dbReference>
<dbReference type="KEGG" id="ani:ANIA_05746"/>
<dbReference type="VEuPathDB" id="FungiDB:AN5746"/>
<dbReference type="eggNOG" id="KOG2670">
    <property type="taxonomic scope" value="Eukaryota"/>
</dbReference>
<dbReference type="HOGENOM" id="CLU_031223_0_0_1"/>
<dbReference type="InParanoid" id="Q5B135"/>
<dbReference type="OMA" id="RCMMSHR"/>
<dbReference type="OrthoDB" id="1739814at2759"/>
<dbReference type="UniPathway" id="UPA00109">
    <property type="reaction ID" value="UER00187"/>
</dbReference>
<dbReference type="Proteomes" id="UP000000560">
    <property type="component" value="Chromosome V"/>
</dbReference>
<dbReference type="GO" id="GO:0000015">
    <property type="term" value="C:phosphopyruvate hydratase complex"/>
    <property type="evidence" value="ECO:0000318"/>
    <property type="project" value="GO_Central"/>
</dbReference>
<dbReference type="GO" id="GO:0000287">
    <property type="term" value="F:magnesium ion binding"/>
    <property type="evidence" value="ECO:0007669"/>
    <property type="project" value="InterPro"/>
</dbReference>
<dbReference type="GO" id="GO:0004634">
    <property type="term" value="F:phosphopyruvate hydratase activity"/>
    <property type="evidence" value="ECO:0000318"/>
    <property type="project" value="GO_Central"/>
</dbReference>
<dbReference type="GO" id="GO:0015976">
    <property type="term" value="P:carbon utilization"/>
    <property type="evidence" value="ECO:0000315"/>
    <property type="project" value="AspGD"/>
</dbReference>
<dbReference type="GO" id="GO:0097308">
    <property type="term" value="P:cellular response to farnesol"/>
    <property type="evidence" value="ECO:0000270"/>
    <property type="project" value="AspGD"/>
</dbReference>
<dbReference type="GO" id="GO:0071470">
    <property type="term" value="P:cellular response to osmotic stress"/>
    <property type="evidence" value="ECO:0000270"/>
    <property type="project" value="AspGD"/>
</dbReference>
<dbReference type="GO" id="GO:0006096">
    <property type="term" value="P:glycolytic process"/>
    <property type="evidence" value="ECO:0000318"/>
    <property type="project" value="GO_Central"/>
</dbReference>
<dbReference type="CDD" id="cd03313">
    <property type="entry name" value="enolase"/>
    <property type="match status" value="1"/>
</dbReference>
<dbReference type="FunFam" id="3.30.390.10:FF:000001">
    <property type="entry name" value="Enolase"/>
    <property type="match status" value="1"/>
</dbReference>
<dbReference type="FunFam" id="3.20.20.120:FF:000002">
    <property type="entry name" value="Enolase 1"/>
    <property type="match status" value="1"/>
</dbReference>
<dbReference type="Gene3D" id="3.20.20.120">
    <property type="entry name" value="Enolase-like C-terminal domain"/>
    <property type="match status" value="1"/>
</dbReference>
<dbReference type="Gene3D" id="3.30.390.10">
    <property type="entry name" value="Enolase-like, N-terminal domain"/>
    <property type="match status" value="1"/>
</dbReference>
<dbReference type="HAMAP" id="MF_00318">
    <property type="entry name" value="Enolase"/>
    <property type="match status" value="1"/>
</dbReference>
<dbReference type="InterPro" id="IPR000941">
    <property type="entry name" value="Enolase"/>
</dbReference>
<dbReference type="InterPro" id="IPR036849">
    <property type="entry name" value="Enolase-like_C_sf"/>
</dbReference>
<dbReference type="InterPro" id="IPR029017">
    <property type="entry name" value="Enolase-like_N"/>
</dbReference>
<dbReference type="InterPro" id="IPR020810">
    <property type="entry name" value="Enolase_C"/>
</dbReference>
<dbReference type="InterPro" id="IPR020809">
    <property type="entry name" value="Enolase_CS"/>
</dbReference>
<dbReference type="InterPro" id="IPR020811">
    <property type="entry name" value="Enolase_N"/>
</dbReference>
<dbReference type="NCBIfam" id="TIGR01060">
    <property type="entry name" value="eno"/>
    <property type="match status" value="1"/>
</dbReference>
<dbReference type="PANTHER" id="PTHR11902">
    <property type="entry name" value="ENOLASE"/>
    <property type="match status" value="1"/>
</dbReference>
<dbReference type="PANTHER" id="PTHR11902:SF1">
    <property type="entry name" value="ENOLASE"/>
    <property type="match status" value="1"/>
</dbReference>
<dbReference type="Pfam" id="PF00113">
    <property type="entry name" value="Enolase_C"/>
    <property type="match status" value="1"/>
</dbReference>
<dbReference type="Pfam" id="PF03952">
    <property type="entry name" value="Enolase_N"/>
    <property type="match status" value="1"/>
</dbReference>
<dbReference type="PIRSF" id="PIRSF001400">
    <property type="entry name" value="Enolase"/>
    <property type="match status" value="1"/>
</dbReference>
<dbReference type="PRINTS" id="PR00148">
    <property type="entry name" value="ENOLASE"/>
</dbReference>
<dbReference type="SFLD" id="SFLDF00002">
    <property type="entry name" value="enolase"/>
    <property type="match status" value="1"/>
</dbReference>
<dbReference type="SFLD" id="SFLDG00178">
    <property type="entry name" value="enolase"/>
    <property type="match status" value="1"/>
</dbReference>
<dbReference type="SMART" id="SM01192">
    <property type="entry name" value="Enolase_C"/>
    <property type="match status" value="1"/>
</dbReference>
<dbReference type="SMART" id="SM01193">
    <property type="entry name" value="Enolase_N"/>
    <property type="match status" value="1"/>
</dbReference>
<dbReference type="SUPFAM" id="SSF51604">
    <property type="entry name" value="Enolase C-terminal domain-like"/>
    <property type="match status" value="1"/>
</dbReference>
<dbReference type="SUPFAM" id="SSF54826">
    <property type="entry name" value="Enolase N-terminal domain-like"/>
    <property type="match status" value="1"/>
</dbReference>
<dbReference type="PROSITE" id="PS00164">
    <property type="entry name" value="ENOLASE"/>
    <property type="match status" value="1"/>
</dbReference>
<keyword id="KW-0963">Cytoplasm</keyword>
<keyword id="KW-0324">Glycolysis</keyword>
<keyword id="KW-0456">Lyase</keyword>
<keyword id="KW-0460">Magnesium</keyword>
<keyword id="KW-0479">Metal-binding</keyword>
<keyword id="KW-1185">Reference proteome</keyword>
<keyword id="KW-0346">Stress response</keyword>
<protein>
    <recommendedName>
        <fullName>Enolase</fullName>
        <ecNumber>4.2.1.11</ecNumber>
    </recommendedName>
    <alternativeName>
        <fullName>2-phospho-D-glycerate hydro-lyase</fullName>
    </alternativeName>
    <alternativeName>
        <fullName>2-phosphoglycerate dehydratase</fullName>
    </alternativeName>
</protein>
<organism>
    <name type="scientific">Emericella nidulans (strain FGSC A4 / ATCC 38163 / CBS 112.46 / NRRL 194 / M139)</name>
    <name type="common">Aspergillus nidulans</name>
    <dbReference type="NCBI Taxonomy" id="227321"/>
    <lineage>
        <taxon>Eukaryota</taxon>
        <taxon>Fungi</taxon>
        <taxon>Dikarya</taxon>
        <taxon>Ascomycota</taxon>
        <taxon>Pezizomycotina</taxon>
        <taxon>Eurotiomycetes</taxon>
        <taxon>Eurotiomycetidae</taxon>
        <taxon>Eurotiales</taxon>
        <taxon>Aspergillaceae</taxon>
        <taxon>Aspergillus</taxon>
        <taxon>Aspergillus subgen. Nidulantes</taxon>
    </lineage>
</organism>
<reference key="1">
    <citation type="journal article" date="2005" name="Nature">
        <title>Sequencing of Aspergillus nidulans and comparative analysis with A. fumigatus and A. oryzae.</title>
        <authorList>
            <person name="Galagan J.E."/>
            <person name="Calvo S.E."/>
            <person name="Cuomo C."/>
            <person name="Ma L.-J."/>
            <person name="Wortman J.R."/>
            <person name="Batzoglou S."/>
            <person name="Lee S.-I."/>
            <person name="Bastuerkmen M."/>
            <person name="Spevak C.C."/>
            <person name="Clutterbuck J."/>
            <person name="Kapitonov V."/>
            <person name="Jurka J."/>
            <person name="Scazzocchio C."/>
            <person name="Farman M.L."/>
            <person name="Butler J."/>
            <person name="Purcell S."/>
            <person name="Harris S."/>
            <person name="Braus G.H."/>
            <person name="Draht O."/>
            <person name="Busch S."/>
            <person name="D'Enfert C."/>
            <person name="Bouchier C."/>
            <person name="Goldman G.H."/>
            <person name="Bell-Pedersen D."/>
            <person name="Griffiths-Jones S."/>
            <person name="Doonan J.H."/>
            <person name="Yu J."/>
            <person name="Vienken K."/>
            <person name="Pain A."/>
            <person name="Freitag M."/>
            <person name="Selker E.U."/>
            <person name="Archer D.B."/>
            <person name="Penalva M.A."/>
            <person name="Oakley B.R."/>
            <person name="Momany M."/>
            <person name="Tanaka T."/>
            <person name="Kumagai T."/>
            <person name="Asai K."/>
            <person name="Machida M."/>
            <person name="Nierman W.C."/>
            <person name="Denning D.W."/>
            <person name="Caddick M.X."/>
            <person name="Hynes M."/>
            <person name="Paoletti M."/>
            <person name="Fischer R."/>
            <person name="Miller B.L."/>
            <person name="Dyer P.S."/>
            <person name="Sachs M.S."/>
            <person name="Osmani S.A."/>
            <person name="Birren B.W."/>
        </authorList>
    </citation>
    <scope>NUCLEOTIDE SEQUENCE [LARGE SCALE GENOMIC DNA]</scope>
    <source>
        <strain>FGSC A4 / ATCC 38163 / CBS 112.46 / NRRL 194 / M139</strain>
    </source>
</reference>
<reference key="2">
    <citation type="journal article" date="2009" name="Fungal Genet. Biol.">
        <title>The 2008 update of the Aspergillus nidulans genome annotation: a community effort.</title>
        <authorList>
            <person name="Wortman J.R."/>
            <person name="Gilsenan J.M."/>
            <person name="Joardar V."/>
            <person name="Deegan J."/>
            <person name="Clutterbuck J."/>
            <person name="Andersen M.R."/>
            <person name="Archer D."/>
            <person name="Bencina M."/>
            <person name="Braus G."/>
            <person name="Coutinho P."/>
            <person name="von Dohren H."/>
            <person name="Doonan J."/>
            <person name="Driessen A.J."/>
            <person name="Durek P."/>
            <person name="Espeso E."/>
            <person name="Fekete E."/>
            <person name="Flipphi M."/>
            <person name="Estrada C.G."/>
            <person name="Geysens S."/>
            <person name="Goldman G."/>
            <person name="de Groot P.W."/>
            <person name="Hansen K."/>
            <person name="Harris S.D."/>
            <person name="Heinekamp T."/>
            <person name="Helmstaedt K."/>
            <person name="Henrissat B."/>
            <person name="Hofmann G."/>
            <person name="Homan T."/>
            <person name="Horio T."/>
            <person name="Horiuchi H."/>
            <person name="James S."/>
            <person name="Jones M."/>
            <person name="Karaffa L."/>
            <person name="Karanyi Z."/>
            <person name="Kato M."/>
            <person name="Keller N."/>
            <person name="Kelly D.E."/>
            <person name="Kiel J.A."/>
            <person name="Kim J.M."/>
            <person name="van der Klei I.J."/>
            <person name="Klis F.M."/>
            <person name="Kovalchuk A."/>
            <person name="Krasevec N."/>
            <person name="Kubicek C.P."/>
            <person name="Liu B."/>
            <person name="Maccabe A."/>
            <person name="Meyer V."/>
            <person name="Mirabito P."/>
            <person name="Miskei M."/>
            <person name="Mos M."/>
            <person name="Mullins J."/>
            <person name="Nelson D.R."/>
            <person name="Nielsen J."/>
            <person name="Oakley B.R."/>
            <person name="Osmani S.A."/>
            <person name="Pakula T."/>
            <person name="Paszewski A."/>
            <person name="Paulsen I."/>
            <person name="Pilsyk S."/>
            <person name="Pocsi I."/>
            <person name="Punt P.J."/>
            <person name="Ram A.F."/>
            <person name="Ren Q."/>
            <person name="Robellet X."/>
            <person name="Robson G."/>
            <person name="Seiboth B."/>
            <person name="van Solingen P."/>
            <person name="Specht T."/>
            <person name="Sun J."/>
            <person name="Taheri-Talesh N."/>
            <person name="Takeshita N."/>
            <person name="Ussery D."/>
            <person name="vanKuyk P.A."/>
            <person name="Visser H."/>
            <person name="van de Vondervoort P.J."/>
            <person name="de Vries R.P."/>
            <person name="Walton J."/>
            <person name="Xiang X."/>
            <person name="Xiong Y."/>
            <person name="Zeng A.P."/>
            <person name="Brandt B.W."/>
            <person name="Cornell M.J."/>
            <person name="van den Hondel C.A."/>
            <person name="Visser J."/>
            <person name="Oliver S.G."/>
            <person name="Turner G."/>
        </authorList>
    </citation>
    <scope>GENOME REANNOTATION</scope>
    <source>
        <strain>FGSC A4 / ATCC 38163 / CBS 112.46 / NRRL 194 / M139</strain>
    </source>
</reference>
<reference key="3">
    <citation type="journal article" date="2007" name="Fungal Genet. Biol.">
        <title>Proteome map of Aspergillus nidulans during osmoadaptation.</title>
        <authorList>
            <person name="Kim Y."/>
            <person name="Nandakumar M.P."/>
            <person name="Marten M.R."/>
        </authorList>
    </citation>
    <scope>INDUCTION</scope>
    <scope>IDENTIFICATION BY MASS SPECTROMETRY</scope>
</reference>
<accession>Q5B135</accession>
<accession>C8VFJ4</accession>